<comment type="function">
    <text evidence="3">Involved in nonsense-mediated decay of mRNAs containing premature stop codons.</text>
</comment>
<comment type="subcellular location">
    <subcellularLocation>
        <location evidence="1">Cytoplasm</location>
    </subcellularLocation>
</comment>
<comment type="miscellaneous">
    <text evidence="2">Present with 6090 molecules/cell in log phase SD medium.</text>
</comment>
<feature type="chain" id="PRO_0000096879" description="Nonsense-mediated decay protein 4">
    <location>
        <begin position="1"/>
        <end position="218"/>
    </location>
</feature>
<feature type="strand" evidence="5">
    <location>
        <begin position="2"/>
        <end position="8"/>
    </location>
</feature>
<feature type="helix" evidence="5">
    <location>
        <begin position="10"/>
        <end position="26"/>
    </location>
</feature>
<feature type="strand" evidence="5">
    <location>
        <begin position="29"/>
        <end position="37"/>
    </location>
</feature>
<feature type="helix" evidence="5">
    <location>
        <begin position="39"/>
        <end position="51"/>
    </location>
</feature>
<feature type="helix" evidence="5">
    <location>
        <begin position="55"/>
        <end position="69"/>
    </location>
</feature>
<feature type="strand" evidence="5">
    <location>
        <begin position="75"/>
        <end position="79"/>
    </location>
</feature>
<feature type="helix" evidence="5">
    <location>
        <begin position="84"/>
        <end position="87"/>
    </location>
</feature>
<feature type="helix" evidence="5">
    <location>
        <begin position="90"/>
        <end position="96"/>
    </location>
</feature>
<feature type="strand" evidence="5">
    <location>
        <begin position="101"/>
        <end position="103"/>
    </location>
</feature>
<feature type="helix" evidence="5">
    <location>
        <begin position="105"/>
        <end position="107"/>
    </location>
</feature>
<feature type="helix" evidence="5">
    <location>
        <begin position="110"/>
        <end position="123"/>
    </location>
</feature>
<feature type="strand" evidence="5">
    <location>
        <begin position="133"/>
        <end position="136"/>
    </location>
</feature>
<feature type="helix" evidence="5">
    <location>
        <begin position="140"/>
        <end position="148"/>
    </location>
</feature>
<feature type="helix" evidence="5">
    <location>
        <begin position="156"/>
        <end position="163"/>
    </location>
</feature>
<feature type="helix" evidence="4">
    <location>
        <begin position="170"/>
        <end position="184"/>
    </location>
</feature>
<feature type="strand" evidence="4">
    <location>
        <begin position="185"/>
        <end position="190"/>
    </location>
</feature>
<feature type="strand" evidence="4">
    <location>
        <begin position="196"/>
        <end position="200"/>
    </location>
</feature>
<protein>
    <recommendedName>
        <fullName>Nonsense-mediated decay protein 4</fullName>
    </recommendedName>
</protein>
<keyword id="KW-0002">3D-structure</keyword>
<keyword id="KW-0963">Cytoplasm</keyword>
<keyword id="KW-0866">Nonsense-mediated mRNA decay</keyword>
<keyword id="KW-1185">Reference proteome</keyword>
<name>NMD4_YEAST</name>
<evidence type="ECO:0000269" key="1">
    <source>
    </source>
</evidence>
<evidence type="ECO:0000269" key="2">
    <source>
    </source>
</evidence>
<evidence type="ECO:0000269" key="3">
    <source>
    </source>
</evidence>
<evidence type="ECO:0007829" key="4">
    <source>
        <dbReference type="PDB" id="8RD3"/>
    </source>
</evidence>
<evidence type="ECO:0007829" key="5">
    <source>
        <dbReference type="PDB" id="8RDD"/>
    </source>
</evidence>
<dbReference type="EMBL" id="U31374">
    <property type="protein sequence ID" value="AAA74489.1"/>
    <property type="molecule type" value="Genomic_DNA"/>
</dbReference>
<dbReference type="EMBL" id="U19103">
    <property type="protein sequence ID" value="AAB67575.1"/>
    <property type="molecule type" value="Genomic_DNA"/>
</dbReference>
<dbReference type="EMBL" id="AY558223">
    <property type="protein sequence ID" value="AAS56549.1"/>
    <property type="molecule type" value="Genomic_DNA"/>
</dbReference>
<dbReference type="EMBL" id="BK006945">
    <property type="protein sequence ID" value="DAA09667.1"/>
    <property type="molecule type" value="Genomic_DNA"/>
</dbReference>
<dbReference type="PIR" id="S51381">
    <property type="entry name" value="S51381"/>
</dbReference>
<dbReference type="RefSeq" id="NP_013467.3">
    <property type="nucleotide sequence ID" value="NM_001182252.3"/>
</dbReference>
<dbReference type="PDB" id="8RD3">
    <property type="method" value="X-ray"/>
    <property type="resolution" value="2.40 A"/>
    <property type="chains" value="B=2-218"/>
</dbReference>
<dbReference type="PDB" id="8RDD">
    <property type="method" value="X-ray"/>
    <property type="resolution" value="1.80 A"/>
    <property type="chains" value="B=2-167"/>
</dbReference>
<dbReference type="PDBsum" id="8RD3"/>
<dbReference type="PDBsum" id="8RDD"/>
<dbReference type="SMR" id="Q12129"/>
<dbReference type="BioGRID" id="31624">
    <property type="interactions" value="81"/>
</dbReference>
<dbReference type="DIP" id="DIP-2439N"/>
<dbReference type="FunCoup" id="Q12129">
    <property type="interactions" value="55"/>
</dbReference>
<dbReference type="IntAct" id="Q12129">
    <property type="interactions" value="19"/>
</dbReference>
<dbReference type="STRING" id="4932.YLR363C"/>
<dbReference type="iPTMnet" id="Q12129"/>
<dbReference type="PaxDb" id="4932-YLR363C"/>
<dbReference type="PeptideAtlas" id="Q12129"/>
<dbReference type="TopDownProteomics" id="Q12129"/>
<dbReference type="EnsemblFungi" id="YLR363C_mRNA">
    <property type="protein sequence ID" value="YLR363C"/>
    <property type="gene ID" value="YLR363C"/>
</dbReference>
<dbReference type="GeneID" id="851077"/>
<dbReference type="KEGG" id="sce:YLR363C"/>
<dbReference type="AGR" id="SGD:S000004355"/>
<dbReference type="SGD" id="S000004355">
    <property type="gene designation" value="NMD4"/>
</dbReference>
<dbReference type="VEuPathDB" id="FungiDB:YLR363C"/>
<dbReference type="eggNOG" id="ENOG502RYBU">
    <property type="taxonomic scope" value="Eukaryota"/>
</dbReference>
<dbReference type="HOGENOM" id="CLU_1273151_0_0_1"/>
<dbReference type="InParanoid" id="Q12129"/>
<dbReference type="OMA" id="PTYTLKE"/>
<dbReference type="OrthoDB" id="5361617at2759"/>
<dbReference type="BioCyc" id="YEAST:G3O-32434-MONOMER"/>
<dbReference type="BioGRID-ORCS" id="851077">
    <property type="hits" value="0 hits in 10 CRISPR screens"/>
</dbReference>
<dbReference type="PRO" id="PR:Q12129"/>
<dbReference type="Proteomes" id="UP000002311">
    <property type="component" value="Chromosome XII"/>
</dbReference>
<dbReference type="RNAct" id="Q12129">
    <property type="molecule type" value="protein"/>
</dbReference>
<dbReference type="GO" id="GO:0005737">
    <property type="term" value="C:cytoplasm"/>
    <property type="evidence" value="ECO:0007005"/>
    <property type="project" value="SGD"/>
</dbReference>
<dbReference type="GO" id="GO:0005634">
    <property type="term" value="C:nucleus"/>
    <property type="evidence" value="ECO:0007005"/>
    <property type="project" value="SGD"/>
</dbReference>
<dbReference type="GO" id="GO:0000184">
    <property type="term" value="P:nuclear-transcribed mRNA catabolic process, nonsense-mediated decay"/>
    <property type="evidence" value="ECO:0000353"/>
    <property type="project" value="SGD"/>
</dbReference>
<dbReference type="CDD" id="cd18717">
    <property type="entry name" value="PIN_ScNmd4p-like"/>
    <property type="match status" value="1"/>
</dbReference>
<dbReference type="Gene3D" id="3.40.50.1010">
    <property type="entry name" value="5'-nuclease"/>
    <property type="match status" value="1"/>
</dbReference>
<dbReference type="InterPro" id="IPR002716">
    <property type="entry name" value="PIN_dom"/>
</dbReference>
<dbReference type="SMART" id="SM00670">
    <property type="entry name" value="PINc"/>
    <property type="match status" value="1"/>
</dbReference>
<sequence>MTQYNFIIDASAFEKGLGNIKRWCSDCTEAVTLNFYIPTFTLNELDFLQQRRKSFAARESLKFIDRLDDSKFANLKVFIEFPEVLDIILWSDVMEHNDSSGKINIAKLPKRLKNLLKSCIYKCYLEGNEGLHWFLISEDPQIREMAMQCNIPSCSIVDVDSILSKDMNDKSFRESEKFNNMMLKNGTKEESENGREIIRTNFNKTVYASRGTGELWSP</sequence>
<accession>Q12129</accession>
<accession>D6VZ01</accession>
<organism>
    <name type="scientific">Saccharomyces cerevisiae (strain ATCC 204508 / S288c)</name>
    <name type="common">Baker's yeast</name>
    <dbReference type="NCBI Taxonomy" id="559292"/>
    <lineage>
        <taxon>Eukaryota</taxon>
        <taxon>Fungi</taxon>
        <taxon>Dikarya</taxon>
        <taxon>Ascomycota</taxon>
        <taxon>Saccharomycotina</taxon>
        <taxon>Saccharomycetes</taxon>
        <taxon>Saccharomycetales</taxon>
        <taxon>Saccharomycetaceae</taxon>
        <taxon>Saccharomyces</taxon>
    </lineage>
</organism>
<proteinExistence type="evidence at protein level"/>
<gene>
    <name type="primary">NMD4</name>
    <name type="ordered locus">YLR363C</name>
</gene>
<reference key="1">
    <citation type="journal article" date="1997" name="Nature">
        <title>The nucleotide sequence of Saccharomyces cerevisiae chromosome XII.</title>
        <authorList>
            <person name="Johnston M."/>
            <person name="Hillier L.W."/>
            <person name="Riles L."/>
            <person name="Albermann K."/>
            <person name="Andre B."/>
            <person name="Ansorge W."/>
            <person name="Benes V."/>
            <person name="Brueckner M."/>
            <person name="Delius H."/>
            <person name="Dubois E."/>
            <person name="Duesterhoeft A."/>
            <person name="Entian K.-D."/>
            <person name="Floeth M."/>
            <person name="Goffeau A."/>
            <person name="Hebling U."/>
            <person name="Heumann K."/>
            <person name="Heuss-Neitzel D."/>
            <person name="Hilbert H."/>
            <person name="Hilger F."/>
            <person name="Kleine K."/>
            <person name="Koetter P."/>
            <person name="Louis E.J."/>
            <person name="Messenguy F."/>
            <person name="Mewes H.-W."/>
            <person name="Miosga T."/>
            <person name="Moestl D."/>
            <person name="Mueller-Auer S."/>
            <person name="Nentwich U."/>
            <person name="Obermaier B."/>
            <person name="Piravandi E."/>
            <person name="Pohl T.M."/>
            <person name="Portetelle D."/>
            <person name="Purnelle B."/>
            <person name="Rechmann S."/>
            <person name="Rieger M."/>
            <person name="Rinke M."/>
            <person name="Rose M."/>
            <person name="Scharfe M."/>
            <person name="Scherens B."/>
            <person name="Scholler P."/>
            <person name="Schwager C."/>
            <person name="Schwarz S."/>
            <person name="Underwood A.P."/>
            <person name="Urrestarazu L.A."/>
            <person name="Vandenbol M."/>
            <person name="Verhasselt P."/>
            <person name="Vierendeels F."/>
            <person name="Voet M."/>
            <person name="Volckaert G."/>
            <person name="Voss H."/>
            <person name="Wambutt R."/>
            <person name="Wedler E."/>
            <person name="Wedler H."/>
            <person name="Zimmermann F.K."/>
            <person name="Zollner A."/>
            <person name="Hani J."/>
            <person name="Hoheisel J.D."/>
        </authorList>
    </citation>
    <scope>NUCLEOTIDE SEQUENCE [LARGE SCALE GENOMIC DNA]</scope>
    <source>
        <strain>ATCC 204508 / S288c</strain>
    </source>
</reference>
<reference key="2">
    <citation type="journal article" date="2014" name="G3 (Bethesda)">
        <title>The reference genome sequence of Saccharomyces cerevisiae: Then and now.</title>
        <authorList>
            <person name="Engel S.R."/>
            <person name="Dietrich F.S."/>
            <person name="Fisk D.G."/>
            <person name="Binkley G."/>
            <person name="Balakrishnan R."/>
            <person name="Costanzo M.C."/>
            <person name="Dwight S.S."/>
            <person name="Hitz B.C."/>
            <person name="Karra K."/>
            <person name="Nash R.S."/>
            <person name="Weng S."/>
            <person name="Wong E.D."/>
            <person name="Lloyd P."/>
            <person name="Skrzypek M.S."/>
            <person name="Miyasato S.R."/>
            <person name="Simison M."/>
            <person name="Cherry J.M."/>
        </authorList>
    </citation>
    <scope>GENOME REANNOTATION</scope>
    <source>
        <strain>ATCC 204508 / S288c</strain>
    </source>
</reference>
<reference key="3">
    <citation type="journal article" date="2007" name="Genome Res.">
        <title>Approaching a complete repository of sequence-verified protein-encoding clones for Saccharomyces cerevisiae.</title>
        <authorList>
            <person name="Hu Y."/>
            <person name="Rolfs A."/>
            <person name="Bhullar B."/>
            <person name="Murthy T.V.S."/>
            <person name="Zhu C."/>
            <person name="Berger M.F."/>
            <person name="Camargo A.A."/>
            <person name="Kelley F."/>
            <person name="McCarron S."/>
            <person name="Jepson D."/>
            <person name="Richardson A."/>
            <person name="Raphael J."/>
            <person name="Moreira D."/>
            <person name="Taycher E."/>
            <person name="Zuo D."/>
            <person name="Mohr S."/>
            <person name="Kane M.F."/>
            <person name="Williamson J."/>
            <person name="Simpson A.J.G."/>
            <person name="Bulyk M.L."/>
            <person name="Harlow E."/>
            <person name="Marsischky G."/>
            <person name="Kolodner R.D."/>
            <person name="LaBaer J."/>
        </authorList>
    </citation>
    <scope>NUCLEOTIDE SEQUENCE [GENOMIC DNA]</scope>
    <source>
        <strain>ATCC 204508 / S288c</strain>
    </source>
</reference>
<reference key="4">
    <citation type="journal article" date="1995" name="Genes Dev.">
        <title>Identification of a novel component of the nonsense-mediated mRNA decay pathway by use of an interacting protein screen.</title>
        <authorList>
            <person name="He F."/>
            <person name="Jacobson A."/>
        </authorList>
    </citation>
    <scope>FUNCTION</scope>
</reference>
<reference key="5">
    <citation type="journal article" date="2003" name="Nature">
        <title>Global analysis of protein localization in budding yeast.</title>
        <authorList>
            <person name="Huh W.-K."/>
            <person name="Falvo J.V."/>
            <person name="Gerke L.C."/>
            <person name="Carroll A.S."/>
            <person name="Howson R.W."/>
            <person name="Weissman J.S."/>
            <person name="O'Shea E.K."/>
        </authorList>
    </citation>
    <scope>SUBCELLULAR LOCATION [LARGE SCALE ANALYSIS]</scope>
</reference>
<reference key="6">
    <citation type="journal article" date="2003" name="Nature">
        <title>Global analysis of protein expression in yeast.</title>
        <authorList>
            <person name="Ghaemmaghami S."/>
            <person name="Huh W.-K."/>
            <person name="Bower K."/>
            <person name="Howson R.W."/>
            <person name="Belle A."/>
            <person name="Dephoure N."/>
            <person name="O'Shea E.K."/>
            <person name="Weissman J.S."/>
        </authorList>
    </citation>
    <scope>LEVEL OF PROTEIN EXPRESSION [LARGE SCALE ANALYSIS]</scope>
</reference>